<evidence type="ECO:0000250" key="1"/>
<evidence type="ECO:0000250" key="2">
    <source>
        <dbReference type="UniProtKB" id="O14929"/>
    </source>
</evidence>
<evidence type="ECO:0000250" key="3">
    <source>
        <dbReference type="UniProtKB" id="Q12341"/>
    </source>
</evidence>
<evidence type="ECO:0000305" key="4"/>
<gene>
    <name type="primary">HAT1</name>
    <name type="ordered locus">CAALFM_C104670WA</name>
    <name type="ORF">CaO19.779</name>
    <name type="ORF">CaO19.8401</name>
</gene>
<feature type="chain" id="PRO_0000227719" description="Histone acetyltransferase type B catalytic subunit">
    <location>
        <begin position="1"/>
        <end position="413"/>
    </location>
</feature>
<feature type="region of interest" description="Interaction with histone H4 N-terminus" evidence="3">
    <location>
        <begin position="51"/>
        <end position="53"/>
    </location>
</feature>
<feature type="region of interest" description="Interaction with histone H4 N-terminus" evidence="3">
    <location>
        <begin position="209"/>
        <end position="211"/>
    </location>
</feature>
<feature type="active site" description="Proton donor/acceptor" evidence="3">
    <location>
        <position position="269"/>
    </location>
</feature>
<feature type="binding site" evidence="3">
    <location>
        <begin position="234"/>
        <end position="236"/>
    </location>
    <ligand>
        <name>acetyl-CoA</name>
        <dbReference type="ChEBI" id="CHEBI:57288"/>
    </ligand>
</feature>
<feature type="binding site" evidence="3">
    <location>
        <begin position="241"/>
        <end position="247"/>
    </location>
    <ligand>
        <name>acetyl-CoA</name>
        <dbReference type="ChEBI" id="CHEBI:57288"/>
    </ligand>
</feature>
<feature type="site" description="Interaction with histone H4 N-terminus" evidence="2">
    <location>
        <position position="182"/>
    </location>
</feature>
<sequence>MSSAKEQSSVTAALQPEQWTTSSNEALKLFVTNPEAALNFQPTFTYPIFGDAETIYGYKDLDIFLCFDHYTFKPFLNIKYSAKLTDDPEIIDIKKTIDEFLPKSTIFKDEVKWVDSIKEEKDNGYKIPGKLIDSFSENDKEYDIYKIDLKSDNGYELHQRLQILVLLFIEAGSFIDAKDELWNLYVLYEKDNKSTSNNEPSIVGFTTAYNYWKYPGAKKFDSTEQESRIKISQFIILPIYQGQGLGQLFYSHLFDKWLAQDDIIEVVVEDPNESFDDLRDRADLKRLNTSEQFDFKAVTPKVDKEWVEKTRRALKLEKRQFARLLEIILLYKLKHGYPGITKRDVRLFIKKRLYDKNKEGLATLDDNTKKDKLQTAYQALEDDYYRILGDLKLNIKRENDEEETDTVSKKQKV</sequence>
<dbReference type="EC" id="2.3.1.48" evidence="3"/>
<dbReference type="EMBL" id="CP017623">
    <property type="protein sequence ID" value="AOW26141.1"/>
    <property type="molecule type" value="Genomic_DNA"/>
</dbReference>
<dbReference type="RefSeq" id="XP_713589.1">
    <property type="nucleotide sequence ID" value="XM_708496.2"/>
</dbReference>
<dbReference type="SMR" id="Q59VF4"/>
<dbReference type="FunCoup" id="Q59VF4">
    <property type="interactions" value="1199"/>
</dbReference>
<dbReference type="STRING" id="237561.Q59VF4"/>
<dbReference type="EnsemblFungi" id="C1_04670W_A-T">
    <property type="protein sequence ID" value="C1_04670W_A-T-p1"/>
    <property type="gene ID" value="C1_04670W_A"/>
</dbReference>
<dbReference type="GeneID" id="3644770"/>
<dbReference type="KEGG" id="cal:CAALFM_C104670WA"/>
<dbReference type="CGD" id="CAL0000199484">
    <property type="gene designation" value="HAT1"/>
</dbReference>
<dbReference type="VEuPathDB" id="FungiDB:C1_04670W_A"/>
<dbReference type="eggNOG" id="KOG2696">
    <property type="taxonomic scope" value="Eukaryota"/>
</dbReference>
<dbReference type="HOGENOM" id="CLU_036024_2_1_1"/>
<dbReference type="InParanoid" id="Q59VF4"/>
<dbReference type="OMA" id="WTCDAND"/>
<dbReference type="OrthoDB" id="10253098at2759"/>
<dbReference type="PHI-base" id="PHI:5282"/>
<dbReference type="PRO" id="PR:Q59VF4"/>
<dbReference type="Proteomes" id="UP000000559">
    <property type="component" value="Chromosome 1"/>
</dbReference>
<dbReference type="GO" id="GO:0000781">
    <property type="term" value="C:chromosome, telomeric region"/>
    <property type="evidence" value="ECO:0007669"/>
    <property type="project" value="GOC"/>
</dbReference>
<dbReference type="GO" id="GO:0005737">
    <property type="term" value="C:cytoplasm"/>
    <property type="evidence" value="ECO:0007669"/>
    <property type="project" value="UniProtKB-SubCell"/>
</dbReference>
<dbReference type="GO" id="GO:0000123">
    <property type="term" value="C:histone acetyltransferase complex"/>
    <property type="evidence" value="ECO:0007669"/>
    <property type="project" value="EnsemblFungi"/>
</dbReference>
<dbReference type="GO" id="GO:0005634">
    <property type="term" value="C:nucleus"/>
    <property type="evidence" value="ECO:0000314"/>
    <property type="project" value="CGD"/>
</dbReference>
<dbReference type="GO" id="GO:0003682">
    <property type="term" value="F:chromatin binding"/>
    <property type="evidence" value="ECO:0007669"/>
    <property type="project" value="EnsemblFungi"/>
</dbReference>
<dbReference type="GO" id="GO:0042393">
    <property type="term" value="F:histone binding"/>
    <property type="evidence" value="ECO:0007669"/>
    <property type="project" value="InterPro"/>
</dbReference>
<dbReference type="GO" id="GO:0010485">
    <property type="term" value="F:histone H4 acetyltransferase activity"/>
    <property type="evidence" value="ECO:0000318"/>
    <property type="project" value="GO_Central"/>
</dbReference>
<dbReference type="GO" id="GO:0043997">
    <property type="term" value="F:histone H4K12 acetyltransferase activity"/>
    <property type="evidence" value="ECO:0000315"/>
    <property type="project" value="CGD"/>
</dbReference>
<dbReference type="GO" id="GO:0043995">
    <property type="term" value="F:histone H4K5 acetyltransferase activity"/>
    <property type="evidence" value="ECO:0000315"/>
    <property type="project" value="CGD"/>
</dbReference>
<dbReference type="GO" id="GO:0034614">
    <property type="term" value="P:cellular response to reactive oxygen species"/>
    <property type="evidence" value="ECO:0000315"/>
    <property type="project" value="CGD"/>
</dbReference>
<dbReference type="GO" id="GO:0006281">
    <property type="term" value="P:DNA repair"/>
    <property type="evidence" value="ECO:0000315"/>
    <property type="project" value="CGD"/>
</dbReference>
<dbReference type="GO" id="GO:0140861">
    <property type="term" value="P:DNA repair-dependent chromatin remodeling"/>
    <property type="evidence" value="ECO:0000315"/>
    <property type="project" value="CGD"/>
</dbReference>
<dbReference type="GO" id="GO:0006302">
    <property type="term" value="P:double-strand break repair"/>
    <property type="evidence" value="ECO:0007669"/>
    <property type="project" value="EnsemblFungi"/>
</dbReference>
<dbReference type="GO" id="GO:2000221">
    <property type="term" value="P:negative regulation of pseudohyphal growth"/>
    <property type="evidence" value="ECO:0000315"/>
    <property type="project" value="CGD"/>
</dbReference>
<dbReference type="GO" id="GO:0036166">
    <property type="term" value="P:phenotypic switching"/>
    <property type="evidence" value="ECO:0000315"/>
    <property type="project" value="CGD"/>
</dbReference>
<dbReference type="GO" id="GO:0031509">
    <property type="term" value="P:subtelomeric heterochromatin formation"/>
    <property type="evidence" value="ECO:0007669"/>
    <property type="project" value="EnsemblFungi"/>
</dbReference>
<dbReference type="FunFam" id="1.10.10.390:FF:000005">
    <property type="entry name" value="Histone acetyltransferase type B catalytic subunit"/>
    <property type="match status" value="1"/>
</dbReference>
<dbReference type="FunFam" id="3.40.630.30:FF:000114">
    <property type="entry name" value="Histone acetyltransferase type B catalytic subunit"/>
    <property type="match status" value="1"/>
</dbReference>
<dbReference type="Gene3D" id="1.10.10.390">
    <property type="match status" value="1"/>
</dbReference>
<dbReference type="Gene3D" id="3.40.630.30">
    <property type="match status" value="1"/>
</dbReference>
<dbReference type="Gene3D" id="3.90.360.10">
    <property type="entry name" value="Histone acetyl transferase 1 (HAT1), N-terminal domain"/>
    <property type="match status" value="1"/>
</dbReference>
<dbReference type="InterPro" id="IPR016181">
    <property type="entry name" value="Acyl_CoA_acyltransferase"/>
</dbReference>
<dbReference type="InterPro" id="IPR019467">
    <property type="entry name" value="Hat1_N"/>
</dbReference>
<dbReference type="InterPro" id="IPR037113">
    <property type="entry name" value="Hat1_N_sf"/>
</dbReference>
<dbReference type="InterPro" id="IPR017380">
    <property type="entry name" value="Hist_AcTrfase_B-typ_cat-su"/>
</dbReference>
<dbReference type="InterPro" id="IPR013523">
    <property type="entry name" value="Hist_AcTrfase_HAT1_C"/>
</dbReference>
<dbReference type="PANTHER" id="PTHR12046">
    <property type="entry name" value="HISTONE ACETYLTRANSFERASE TYPE B CATALYTIC SUBUNIT"/>
    <property type="match status" value="1"/>
</dbReference>
<dbReference type="Pfam" id="PF21184">
    <property type="entry name" value="HAT1_C_fung"/>
    <property type="match status" value="1"/>
</dbReference>
<dbReference type="Pfam" id="PF10394">
    <property type="entry name" value="Hat1_N"/>
    <property type="match status" value="1"/>
</dbReference>
<dbReference type="PIRSF" id="PIRSF038084">
    <property type="entry name" value="HAT-B_cat"/>
    <property type="match status" value="1"/>
</dbReference>
<dbReference type="SUPFAM" id="SSF55729">
    <property type="entry name" value="Acyl-CoA N-acyltransferases (Nat)"/>
    <property type="match status" value="1"/>
</dbReference>
<protein>
    <recommendedName>
        <fullName>Histone acetyltransferase type B catalytic subunit</fullName>
        <ecNumber evidence="3">2.3.1.48</ecNumber>
    </recommendedName>
</protein>
<name>HAT1_CANAL</name>
<reference key="1">
    <citation type="journal article" date="2004" name="Proc. Natl. Acad. Sci. U.S.A.">
        <title>The diploid genome sequence of Candida albicans.</title>
        <authorList>
            <person name="Jones T."/>
            <person name="Federspiel N.A."/>
            <person name="Chibana H."/>
            <person name="Dungan J."/>
            <person name="Kalman S."/>
            <person name="Magee B.B."/>
            <person name="Newport G."/>
            <person name="Thorstenson Y.R."/>
            <person name="Agabian N."/>
            <person name="Magee P.T."/>
            <person name="Davis R.W."/>
            <person name="Scherer S."/>
        </authorList>
    </citation>
    <scope>NUCLEOTIDE SEQUENCE [LARGE SCALE GENOMIC DNA]</scope>
    <source>
        <strain>SC5314 / ATCC MYA-2876</strain>
    </source>
</reference>
<reference key="2">
    <citation type="journal article" date="2007" name="Genome Biol.">
        <title>Assembly of the Candida albicans genome into sixteen supercontigs aligned on the eight chromosomes.</title>
        <authorList>
            <person name="van het Hoog M."/>
            <person name="Rast T.J."/>
            <person name="Martchenko M."/>
            <person name="Grindle S."/>
            <person name="Dignard D."/>
            <person name="Hogues H."/>
            <person name="Cuomo C."/>
            <person name="Berriman M."/>
            <person name="Scherer S."/>
            <person name="Magee B.B."/>
            <person name="Whiteway M."/>
            <person name="Chibana H."/>
            <person name="Nantel A."/>
            <person name="Magee P.T."/>
        </authorList>
    </citation>
    <scope>GENOME REANNOTATION</scope>
    <source>
        <strain>SC5314 / ATCC MYA-2876</strain>
    </source>
</reference>
<reference key="3">
    <citation type="journal article" date="2013" name="Genome Biol.">
        <title>Assembly of a phased diploid Candida albicans genome facilitates allele-specific measurements and provides a simple model for repeat and indel structure.</title>
        <authorList>
            <person name="Muzzey D."/>
            <person name="Schwartz K."/>
            <person name="Weissman J.S."/>
            <person name="Sherlock G."/>
        </authorList>
    </citation>
    <scope>NUCLEOTIDE SEQUENCE [LARGE SCALE GENOMIC DNA]</scope>
    <scope>GENOME REANNOTATION</scope>
    <source>
        <strain>SC5314 / ATCC MYA-2876</strain>
    </source>
</reference>
<organism>
    <name type="scientific">Candida albicans (strain SC5314 / ATCC MYA-2876)</name>
    <name type="common">Yeast</name>
    <dbReference type="NCBI Taxonomy" id="237561"/>
    <lineage>
        <taxon>Eukaryota</taxon>
        <taxon>Fungi</taxon>
        <taxon>Dikarya</taxon>
        <taxon>Ascomycota</taxon>
        <taxon>Saccharomycotina</taxon>
        <taxon>Pichiomycetes</taxon>
        <taxon>Debaryomycetaceae</taxon>
        <taxon>Candida/Lodderomyces clade</taxon>
        <taxon>Candida</taxon>
    </lineage>
</organism>
<accession>Q59VF4</accession>
<accession>A0A1D8PDC8</accession>
<keyword id="KW-0012">Acyltransferase</keyword>
<keyword id="KW-0156">Chromatin regulator</keyword>
<keyword id="KW-0963">Cytoplasm</keyword>
<keyword id="KW-0227">DNA damage</keyword>
<keyword id="KW-0234">DNA repair</keyword>
<keyword id="KW-0539">Nucleus</keyword>
<keyword id="KW-1185">Reference proteome</keyword>
<keyword id="KW-0808">Transferase</keyword>
<proteinExistence type="inferred from homology"/>
<comment type="function">
    <text evidence="3">Catalytic component of the histone acetylase B (HAT-B) complex. Acetylates 'Lys-14' of histone H4 which is required for telomeric silencing. Has intrinsic substrate specificity that modifies lysine in recognition sequence GXGKXG. Involved in DNA double-strand break repair.</text>
</comment>
<comment type="catalytic activity">
    <reaction evidence="3">
        <text>L-lysyl-[protein] + acetyl-CoA = N(6)-acetyl-L-lysyl-[protein] + CoA + H(+)</text>
        <dbReference type="Rhea" id="RHEA:45948"/>
        <dbReference type="Rhea" id="RHEA-COMP:9752"/>
        <dbReference type="Rhea" id="RHEA-COMP:10731"/>
        <dbReference type="ChEBI" id="CHEBI:15378"/>
        <dbReference type="ChEBI" id="CHEBI:29969"/>
        <dbReference type="ChEBI" id="CHEBI:57287"/>
        <dbReference type="ChEBI" id="CHEBI:57288"/>
        <dbReference type="ChEBI" id="CHEBI:61930"/>
        <dbReference type="EC" id="2.3.1.48"/>
    </reaction>
</comment>
<comment type="subunit">
    <text evidence="1 3">Component of the HAT-B complex composed of at least HAT1 and HAT2. The HAT-B complex binds to histone H4 tail (By similarity).</text>
</comment>
<comment type="subcellular location">
    <subcellularLocation>
        <location evidence="1">Cytoplasm</location>
    </subcellularLocation>
    <subcellularLocation>
        <location evidence="1">Nucleus</location>
    </subcellularLocation>
</comment>
<comment type="similarity">
    <text evidence="4">Belongs to the HAT1 family.</text>
</comment>